<evidence type="ECO:0000250" key="1">
    <source>
        <dbReference type="UniProtKB" id="Q2G2U6"/>
    </source>
</evidence>
<evidence type="ECO:0000250" key="2">
    <source>
        <dbReference type="UniProtKB" id="Q7A8E1"/>
    </source>
</evidence>
<evidence type="ECO:0000250" key="3">
    <source>
        <dbReference type="UniProtKB" id="Q9RDT5"/>
    </source>
</evidence>
<evidence type="ECO:0000255" key="4">
    <source>
        <dbReference type="PROSITE-ProRule" id="PRU00169"/>
    </source>
</evidence>
<evidence type="ECO:0000255" key="5">
    <source>
        <dbReference type="PROSITE-ProRule" id="PRU01091"/>
    </source>
</evidence>
<evidence type="ECO:0000305" key="6"/>
<protein>
    <recommendedName>
        <fullName evidence="6">Transcriptional regulatory protein WalR</fullName>
    </recommendedName>
</protein>
<keyword id="KW-0010">Activator</keyword>
<keyword id="KW-0963">Cytoplasm</keyword>
<keyword id="KW-0238">DNA-binding</keyword>
<keyword id="KW-0597">Phosphoprotein</keyword>
<keyword id="KW-0804">Transcription</keyword>
<keyword id="KW-0805">Transcription regulation</keyword>
<keyword id="KW-0902">Two-component regulatory system</keyword>
<accession>A8YYU1</accession>
<sequence>MARKVVVVDDEKPIADILEFNLKKEGYDVYCAYDGNDAVDLIYEEEPDIVLLDIMLPGRDGMEVCREVRKKYEMPIIMLTAKDSEIDKVLGLELGADDYVTKPFSTRELIARVKANLRRHYSQPAQDTGNVTNEITIKDIVIYPDAYSIKKRGEDIELTHREFELFHYLSKHMGQVMTREHLLQTVWGYDYFGDVRTVDVTIRRLREKIEDDPSHPEYIVTRRGVGYFLQQHE</sequence>
<proteinExistence type="inferred from homology"/>
<name>WALR_STAAT</name>
<feature type="chain" id="PRO_0000353044" description="Transcriptional regulatory protein WalR">
    <location>
        <begin position="1"/>
        <end position="233"/>
    </location>
</feature>
<feature type="domain" description="Response regulatory" evidence="4">
    <location>
        <begin position="4"/>
        <end position="117"/>
    </location>
</feature>
<feature type="DNA-binding region" description="OmpR/PhoB-type" evidence="5">
    <location>
        <begin position="132"/>
        <end position="231"/>
    </location>
</feature>
<feature type="modified residue" description="4-aspartylphosphate" evidence="4">
    <location>
        <position position="53"/>
    </location>
</feature>
<feature type="modified residue" description="Phosphothreonine" evidence="2">
    <location>
        <position position="101"/>
    </location>
</feature>
<gene>
    <name type="primary">walR</name>
    <name type="synonym">yycF</name>
    <name type="ordered locus">USA300HOU_0018</name>
</gene>
<comment type="function">
    <text evidence="1 3">Member of the two-component regulatory system WalK/WalR that regulates genes involved in cell wall metabolism, virulence regulation, biofilm production, oxidative stress resistance and antibiotic resistance via direct or indirect regulation of autolysins (By similarity). Functions as a transcription regulator by direct binding to promoter regions (By similarity).</text>
</comment>
<comment type="subcellular location">
    <subcellularLocation>
        <location evidence="6">Cytoplasm</location>
    </subcellularLocation>
</comment>
<comment type="PTM">
    <text evidence="2 3">Phosphorylated by WalK on Asp-53 (By similarity). Phosphorylated by PknB on Thr-101 (By similarity).</text>
</comment>
<comment type="sequence caution" evidence="6">
    <conflict type="erroneous initiation">
        <sequence resource="EMBL-CDS" id="ABX28064"/>
    </conflict>
</comment>
<organism>
    <name type="scientific">Staphylococcus aureus (strain USA300 / TCH1516)</name>
    <dbReference type="NCBI Taxonomy" id="451516"/>
    <lineage>
        <taxon>Bacteria</taxon>
        <taxon>Bacillati</taxon>
        <taxon>Bacillota</taxon>
        <taxon>Bacilli</taxon>
        <taxon>Bacillales</taxon>
        <taxon>Staphylococcaceae</taxon>
        <taxon>Staphylococcus</taxon>
    </lineage>
</organism>
<reference key="1">
    <citation type="journal article" date="2007" name="BMC Microbiol.">
        <title>Subtle genetic changes enhance virulence of methicillin resistant and sensitive Staphylococcus aureus.</title>
        <authorList>
            <person name="Highlander S.K."/>
            <person name="Hulten K.G."/>
            <person name="Qin X."/>
            <person name="Jiang H."/>
            <person name="Yerrapragada S."/>
            <person name="Mason E.O. Jr."/>
            <person name="Shang Y."/>
            <person name="Williams T.M."/>
            <person name="Fortunov R.M."/>
            <person name="Liu Y."/>
            <person name="Igboeli O."/>
            <person name="Petrosino J."/>
            <person name="Tirumalai M."/>
            <person name="Uzman A."/>
            <person name="Fox G.E."/>
            <person name="Cardenas A.M."/>
            <person name="Muzny D.M."/>
            <person name="Hemphill L."/>
            <person name="Ding Y."/>
            <person name="Dugan S."/>
            <person name="Blyth P.R."/>
            <person name="Buhay C.J."/>
            <person name="Dinh H.H."/>
            <person name="Hawes A.C."/>
            <person name="Holder M."/>
            <person name="Kovar C.L."/>
            <person name="Lee S.L."/>
            <person name="Liu W."/>
            <person name="Nazareth L.V."/>
            <person name="Wang Q."/>
            <person name="Zhou J."/>
            <person name="Kaplan S.L."/>
            <person name="Weinstock G.M."/>
        </authorList>
    </citation>
    <scope>NUCLEOTIDE SEQUENCE [LARGE SCALE GENOMIC DNA]</scope>
    <source>
        <strain>USA300 / TCH1516</strain>
    </source>
</reference>
<dbReference type="EMBL" id="CP000730">
    <property type="protein sequence ID" value="ABX28064.1"/>
    <property type="status" value="ALT_INIT"/>
    <property type="molecule type" value="Genomic_DNA"/>
</dbReference>
<dbReference type="RefSeq" id="WP_000101976.1">
    <property type="nucleotide sequence ID" value="NC_010079.1"/>
</dbReference>
<dbReference type="SMR" id="A8YYU1"/>
<dbReference type="GeneID" id="98344401"/>
<dbReference type="KEGG" id="sax:USA300HOU_0018"/>
<dbReference type="HOGENOM" id="CLU_000445_30_4_9"/>
<dbReference type="GO" id="GO:0005829">
    <property type="term" value="C:cytosol"/>
    <property type="evidence" value="ECO:0007669"/>
    <property type="project" value="TreeGrafter"/>
</dbReference>
<dbReference type="GO" id="GO:0032993">
    <property type="term" value="C:protein-DNA complex"/>
    <property type="evidence" value="ECO:0007669"/>
    <property type="project" value="TreeGrafter"/>
</dbReference>
<dbReference type="GO" id="GO:0000156">
    <property type="term" value="F:phosphorelay response regulator activity"/>
    <property type="evidence" value="ECO:0007669"/>
    <property type="project" value="TreeGrafter"/>
</dbReference>
<dbReference type="GO" id="GO:0000976">
    <property type="term" value="F:transcription cis-regulatory region binding"/>
    <property type="evidence" value="ECO:0007669"/>
    <property type="project" value="TreeGrafter"/>
</dbReference>
<dbReference type="GO" id="GO:0006355">
    <property type="term" value="P:regulation of DNA-templated transcription"/>
    <property type="evidence" value="ECO:0007669"/>
    <property type="project" value="InterPro"/>
</dbReference>
<dbReference type="CDD" id="cd17614">
    <property type="entry name" value="REC_OmpR_YycF-like"/>
    <property type="match status" value="1"/>
</dbReference>
<dbReference type="CDD" id="cd00383">
    <property type="entry name" value="trans_reg_C"/>
    <property type="match status" value="1"/>
</dbReference>
<dbReference type="FunFam" id="1.10.10.10:FF:000089">
    <property type="entry name" value="Alkaline phosphatase synthesis response regulator"/>
    <property type="match status" value="1"/>
</dbReference>
<dbReference type="FunFam" id="3.40.50.2300:FF:000052">
    <property type="entry name" value="DNA-binding response regulator YycF"/>
    <property type="match status" value="1"/>
</dbReference>
<dbReference type="Gene3D" id="3.40.50.2300">
    <property type="match status" value="1"/>
</dbReference>
<dbReference type="Gene3D" id="6.10.250.690">
    <property type="match status" value="1"/>
</dbReference>
<dbReference type="Gene3D" id="1.10.10.10">
    <property type="entry name" value="Winged helix-like DNA-binding domain superfamily/Winged helix DNA-binding domain"/>
    <property type="match status" value="1"/>
</dbReference>
<dbReference type="InterPro" id="IPR011006">
    <property type="entry name" value="CheY-like_superfamily"/>
</dbReference>
<dbReference type="InterPro" id="IPR001867">
    <property type="entry name" value="OmpR/PhoB-type_DNA-bd"/>
</dbReference>
<dbReference type="InterPro" id="IPR047791">
    <property type="entry name" value="Resp_reg_WalR"/>
</dbReference>
<dbReference type="InterPro" id="IPR016032">
    <property type="entry name" value="Sig_transdc_resp-reg_C-effctor"/>
</dbReference>
<dbReference type="InterPro" id="IPR001789">
    <property type="entry name" value="Sig_transdc_resp-reg_receiver"/>
</dbReference>
<dbReference type="InterPro" id="IPR039420">
    <property type="entry name" value="WalR-like"/>
</dbReference>
<dbReference type="InterPro" id="IPR036388">
    <property type="entry name" value="WH-like_DNA-bd_sf"/>
</dbReference>
<dbReference type="NCBIfam" id="NF040534">
    <property type="entry name" value="resp_reg_YycF"/>
    <property type="match status" value="1"/>
</dbReference>
<dbReference type="PANTHER" id="PTHR48111:SF40">
    <property type="entry name" value="PHOSPHATE REGULON TRANSCRIPTIONAL REGULATORY PROTEIN PHOB"/>
    <property type="match status" value="1"/>
</dbReference>
<dbReference type="PANTHER" id="PTHR48111">
    <property type="entry name" value="REGULATOR OF RPOS"/>
    <property type="match status" value="1"/>
</dbReference>
<dbReference type="Pfam" id="PF00072">
    <property type="entry name" value="Response_reg"/>
    <property type="match status" value="1"/>
</dbReference>
<dbReference type="Pfam" id="PF00486">
    <property type="entry name" value="Trans_reg_C"/>
    <property type="match status" value="1"/>
</dbReference>
<dbReference type="SMART" id="SM00448">
    <property type="entry name" value="REC"/>
    <property type="match status" value="1"/>
</dbReference>
<dbReference type="SMART" id="SM00862">
    <property type="entry name" value="Trans_reg_C"/>
    <property type="match status" value="1"/>
</dbReference>
<dbReference type="SUPFAM" id="SSF46894">
    <property type="entry name" value="C-terminal effector domain of the bipartite response regulators"/>
    <property type="match status" value="1"/>
</dbReference>
<dbReference type="SUPFAM" id="SSF52172">
    <property type="entry name" value="CheY-like"/>
    <property type="match status" value="1"/>
</dbReference>
<dbReference type="PROSITE" id="PS51755">
    <property type="entry name" value="OMPR_PHOB"/>
    <property type="match status" value="1"/>
</dbReference>
<dbReference type="PROSITE" id="PS50110">
    <property type="entry name" value="RESPONSE_REGULATORY"/>
    <property type="match status" value="1"/>
</dbReference>